<feature type="transit peptide" description="Chloroplast" evidence="1">
    <location>
        <begin position="1"/>
        <end position="71"/>
    </location>
</feature>
<feature type="chain" id="PRO_0000042800" description="Inorganic phosphate transporter 2-1, chloroplastic">
    <location>
        <begin position="72"/>
        <end position="587"/>
    </location>
</feature>
<feature type="transmembrane region" description="Helical" evidence="1">
    <location>
        <begin position="127"/>
        <end position="147"/>
    </location>
</feature>
<feature type="transmembrane region" description="Helical" evidence="1">
    <location>
        <begin position="154"/>
        <end position="174"/>
    </location>
</feature>
<feature type="transmembrane region" description="Helical" evidence="1">
    <location>
        <begin position="195"/>
        <end position="215"/>
    </location>
</feature>
<feature type="transmembrane region" description="Helical" evidence="1">
    <location>
        <begin position="233"/>
        <end position="253"/>
    </location>
</feature>
<feature type="transmembrane region" description="Helical" evidence="1">
    <location>
        <begin position="265"/>
        <end position="285"/>
    </location>
</feature>
<feature type="transmembrane region" description="Helical" evidence="1">
    <location>
        <begin position="289"/>
        <end position="309"/>
    </location>
</feature>
<feature type="transmembrane region" description="Helical" evidence="1">
    <location>
        <begin position="327"/>
        <end position="347"/>
    </location>
</feature>
<feature type="transmembrane region" description="Helical" evidence="1">
    <location>
        <begin position="352"/>
        <end position="372"/>
    </location>
</feature>
<feature type="transmembrane region" description="Helical" evidence="1">
    <location>
        <begin position="413"/>
        <end position="433"/>
    </location>
</feature>
<feature type="transmembrane region" description="Helical" evidence="1">
    <location>
        <begin position="465"/>
        <end position="485"/>
    </location>
</feature>
<feature type="transmembrane region" description="Helical" evidence="1">
    <location>
        <begin position="523"/>
        <end position="543"/>
    </location>
</feature>
<feature type="transmembrane region" description="Helical" evidence="1">
    <location>
        <begin position="559"/>
        <end position="579"/>
    </location>
</feature>
<feature type="region of interest" description="Disordered" evidence="2">
    <location>
        <begin position="74"/>
        <end position="106"/>
    </location>
</feature>
<feature type="compositionally biased region" description="Polar residues" evidence="2">
    <location>
        <begin position="85"/>
        <end position="98"/>
    </location>
</feature>
<feature type="splice variant" id="VSP_018146" description="In isoform 2." evidence="6">
    <original>M</original>
    <variation>MQIHFHHHQYHHQLHSHHPWPISHLYM</variation>
    <location>
        <position position="1"/>
    </location>
</feature>
<gene>
    <name type="primary">PHT2-1</name>
    <name type="synonym">PHT2</name>
    <name type="ordered locus">At3g26570</name>
    <name type="ORF">MFE16.10</name>
</gene>
<protein>
    <recommendedName>
        <fullName>Inorganic phosphate transporter 2-1, chloroplastic</fullName>
    </recommendedName>
    <alternativeName>
        <fullName>H(+)/Pi cotransporter</fullName>
        <shortName>AtPht2;1</shortName>
    </alternativeName>
</protein>
<accession>Q38954</accession>
<accession>Q3EAZ6</accession>
<organism>
    <name type="scientific">Arabidopsis thaliana</name>
    <name type="common">Mouse-ear cress</name>
    <dbReference type="NCBI Taxonomy" id="3702"/>
    <lineage>
        <taxon>Eukaryota</taxon>
        <taxon>Viridiplantae</taxon>
        <taxon>Streptophyta</taxon>
        <taxon>Embryophyta</taxon>
        <taxon>Tracheophyta</taxon>
        <taxon>Spermatophyta</taxon>
        <taxon>Magnoliopsida</taxon>
        <taxon>eudicotyledons</taxon>
        <taxon>Gunneridae</taxon>
        <taxon>Pentapetalae</taxon>
        <taxon>rosids</taxon>
        <taxon>malvids</taxon>
        <taxon>Brassicales</taxon>
        <taxon>Brassicaceae</taxon>
        <taxon>Camelineae</taxon>
        <taxon>Arabidopsis</taxon>
    </lineage>
</organism>
<sequence>MTLPYRFSSVRNHSLLLKTSHLCTPRSALGCCFSPKESPFFRKNTAQFLSPQKHTSLPLKLVCPLASFSSYADSEGEEQHHADQPIQNPHESSTVSNESDGKGNAEATGDFSGMAQAFHISSTTARAISIVIAFSALTLPIFMKSLGQGLALKTKLLSYATLLFGFYMAWNIGANDVANAMGTSVGSGALTIRQAVMTAAVLEFSGALLMGTHVTSTMQKGILMANVFQGKDMLLFAGLLSSLAAAGTWLQVASYYGWPVSTTHCIVGSMVGFGLVYGGAGAVFWSSLAKVASSWVISPILGALVSFLVYKCIRRFVYSAPNPGQAAAAAAPVAVFVGVASISSAALPLSKIFPIALSQALACGVAGAIVFDRIIRKQLGHLLAKTKSPETSQNQPKTIGFLSDIAGPTGTQLEIVYGIFGYMQVLSACFMSFAHGGNDVSNAIGPLAAALSILQNGAAAGGAEIVIPMDVLAWGGFGIVAGLTMWGYRVIATIGKKITELTPTRGFAAEFAAASVVLFASKLGLPISATHTLVGAVMGVGFARGLNSVRAETVREIVASWLVTIPVGATLAVIYTWIFTKILSFVL</sequence>
<proteinExistence type="evidence at protein level"/>
<keyword id="KW-0025">Alternative splicing</keyword>
<keyword id="KW-0150">Chloroplast</keyword>
<keyword id="KW-0472">Membrane</keyword>
<keyword id="KW-0592">Phosphate transport</keyword>
<keyword id="KW-0934">Plastid</keyword>
<keyword id="KW-1001">Plastid inner membrane</keyword>
<keyword id="KW-1185">Reference proteome</keyword>
<keyword id="KW-0769">Symport</keyword>
<keyword id="KW-0809">Transit peptide</keyword>
<keyword id="KW-0812">Transmembrane</keyword>
<keyword id="KW-1133">Transmembrane helix</keyword>
<keyword id="KW-0813">Transport</keyword>
<name>PHT21_ARATH</name>
<evidence type="ECO:0000255" key="1"/>
<evidence type="ECO:0000256" key="2">
    <source>
        <dbReference type="SAM" id="MobiDB-lite"/>
    </source>
</evidence>
<evidence type="ECO:0000269" key="3">
    <source>
    </source>
</evidence>
<evidence type="ECO:0000269" key="4">
    <source>
    </source>
</evidence>
<evidence type="ECO:0000269" key="5">
    <source>
    </source>
</evidence>
<evidence type="ECO:0000305" key="6"/>
<evidence type="ECO:0000305" key="7">
    <source>
    </source>
</evidence>
<evidence type="ECO:0000305" key="8">
    <source>
    </source>
</evidence>
<reference key="1">
    <citation type="journal article" date="1996" name="Nucleic Acids Res.">
        <title>Sequence analysis of an 81 kb contig from Arabidopsis thaliana chromosome III.</title>
        <authorList>
            <person name="Quigley F."/>
            <person name="Dao P."/>
            <person name="Cottet A."/>
            <person name="Mache R."/>
        </authorList>
    </citation>
    <scope>NUCLEOTIDE SEQUENCE [GENOMIC DNA / MRNA]</scope>
    <source>
        <strain>cv. Columbia</strain>
    </source>
</reference>
<reference key="2">
    <citation type="journal article" date="1999" name="Plant Cell">
        <title>Pht2;1 encodes a low-affinity phosphate transporter from Arabidopsis.</title>
        <authorList>
            <person name="Daram P."/>
            <person name="Brunner S."/>
            <person name="Rausch C."/>
            <person name="Steiner C."/>
            <person name="Amrhein N."/>
            <person name="Bucher M."/>
        </authorList>
    </citation>
    <scope>NUCLEOTIDE SEQUENCE [MRNA]</scope>
    <scope>TISSUE SPECIFICITY</scope>
    <scope>INDUCTION</scope>
    <scope>BIOPHYSICOCHEMICAL PROPERTIES</scope>
    <source>
        <strain>cv. Columbia</strain>
    </source>
</reference>
<reference key="3">
    <citation type="journal article" date="2002" name="Plant Cell">
        <title>A chloroplast phosphate transporter, PHT2;1, influences allocation of phosphate within the plant and phosphate-starvation responses.</title>
        <authorList>
            <person name="Versaw W.K."/>
            <person name="Harrison M.J."/>
        </authorList>
    </citation>
    <scope>NUCLEOTIDE SEQUENCE [MRNA]</scope>
    <scope>FUNCTION</scope>
    <scope>SUBCELLULAR LOCATION</scope>
    <scope>INDUCTION</scope>
    <source>
        <strain>cv. Columbia</strain>
    </source>
</reference>
<reference key="4">
    <citation type="journal article" date="2000" name="DNA Res.">
        <title>Structural analysis of Arabidopsis thaliana chromosome 3. I. Sequence features of the regions of 4,504,864 bp covered by sixty P1 and TAC clones.</title>
        <authorList>
            <person name="Sato S."/>
            <person name="Nakamura Y."/>
            <person name="Kaneko T."/>
            <person name="Katoh T."/>
            <person name="Asamizu E."/>
            <person name="Tabata S."/>
        </authorList>
    </citation>
    <scope>NUCLEOTIDE SEQUENCE [LARGE SCALE GENOMIC DNA]</scope>
    <source>
        <strain>cv. Columbia</strain>
    </source>
</reference>
<reference key="5">
    <citation type="journal article" date="2017" name="Plant J.">
        <title>Araport11: a complete reannotation of the Arabidopsis thaliana reference genome.</title>
        <authorList>
            <person name="Cheng C.Y."/>
            <person name="Krishnakumar V."/>
            <person name="Chan A.P."/>
            <person name="Thibaud-Nissen F."/>
            <person name="Schobel S."/>
            <person name="Town C.D."/>
        </authorList>
    </citation>
    <scope>GENOME REANNOTATION</scope>
    <source>
        <strain>cv. Columbia</strain>
    </source>
</reference>
<reference key="6">
    <citation type="journal article" date="2004" name="Plant J.">
        <title>Expression analysis suggests novel roles for the plastidic phosphate transporter Pht2;1 in auto- and heterotrophic tissues in potato and Arabidopsis.</title>
        <authorList>
            <person name="Rausch C."/>
            <person name="Zimmermann P."/>
            <person name="Amrhein N."/>
            <person name="Bucher M."/>
        </authorList>
    </citation>
    <scope>TISSUE SPECIFICITY</scope>
    <scope>INDUCTION</scope>
    <scope>DEVELOPMENTAL STAGE</scope>
    <scope>SUBCELLULAR LOCATION</scope>
</reference>
<dbReference type="EMBL" id="X97484">
    <property type="protein sequence ID" value="CAA66116.1"/>
    <property type="molecule type" value="mRNA"/>
</dbReference>
<dbReference type="EMBL" id="X98130">
    <property type="protein sequence ID" value="CAA66826.1"/>
    <property type="molecule type" value="Genomic_DNA"/>
</dbReference>
<dbReference type="EMBL" id="AJ302645">
    <property type="protein sequence ID" value="CAC15560.1"/>
    <property type="molecule type" value="mRNA"/>
</dbReference>
<dbReference type="EMBL" id="AF515591">
    <property type="protein sequence ID" value="AAM53960.1"/>
    <property type="molecule type" value="mRNA"/>
</dbReference>
<dbReference type="EMBL" id="AB028611">
    <property type="protein sequence ID" value="BAB01839.1"/>
    <property type="molecule type" value="Genomic_DNA"/>
</dbReference>
<dbReference type="EMBL" id="CP002686">
    <property type="protein sequence ID" value="AEE77180.1"/>
    <property type="molecule type" value="Genomic_DNA"/>
</dbReference>
<dbReference type="EMBL" id="CP002686">
    <property type="protein sequence ID" value="AEE77181.1"/>
    <property type="molecule type" value="Genomic_DNA"/>
</dbReference>
<dbReference type="RefSeq" id="NP_189289.2">
    <molecule id="Q38954-2"/>
    <property type="nucleotide sequence ID" value="NM_113565.3"/>
</dbReference>
<dbReference type="RefSeq" id="NP_850633.1">
    <molecule id="Q38954-1"/>
    <property type="nucleotide sequence ID" value="NM_180302.2"/>
</dbReference>
<dbReference type="SMR" id="Q38954"/>
<dbReference type="FunCoup" id="Q38954">
    <property type="interactions" value="2000"/>
</dbReference>
<dbReference type="STRING" id="3702.Q38954"/>
<dbReference type="TCDB" id="2.A.20.2.4">
    <property type="family name" value="the inorganic phosphate transporter (pit) family"/>
</dbReference>
<dbReference type="PaxDb" id="3702-AT3G26570.1"/>
<dbReference type="ProteomicsDB" id="235110">
    <molecule id="Q38954-1"/>
</dbReference>
<dbReference type="EnsemblPlants" id="AT3G26570.1">
    <molecule id="Q38954-2"/>
    <property type="protein sequence ID" value="AT3G26570.1"/>
    <property type="gene ID" value="AT3G26570"/>
</dbReference>
<dbReference type="EnsemblPlants" id="AT3G26570.2">
    <molecule id="Q38954-1"/>
    <property type="protein sequence ID" value="AT3G26570.2"/>
    <property type="gene ID" value="AT3G26570"/>
</dbReference>
<dbReference type="Gramene" id="AT3G26570.1">
    <molecule id="Q38954-2"/>
    <property type="protein sequence ID" value="AT3G26570.1"/>
    <property type="gene ID" value="AT3G26570"/>
</dbReference>
<dbReference type="Gramene" id="AT3G26570.2">
    <molecule id="Q38954-1"/>
    <property type="protein sequence ID" value="AT3G26570.2"/>
    <property type="gene ID" value="AT3G26570"/>
</dbReference>
<dbReference type="KEGG" id="ath:AT3G26570"/>
<dbReference type="Araport" id="AT3G26570"/>
<dbReference type="TAIR" id="AT3G26570">
    <property type="gene designation" value="PHT2"/>
</dbReference>
<dbReference type="eggNOG" id="KOG2493">
    <property type="taxonomic scope" value="Eukaryota"/>
</dbReference>
<dbReference type="HOGENOM" id="CLU_015355_3_3_1"/>
<dbReference type="InParanoid" id="Q38954"/>
<dbReference type="PhylomeDB" id="Q38954"/>
<dbReference type="PRO" id="PR:Q38954"/>
<dbReference type="Proteomes" id="UP000006548">
    <property type="component" value="Chromosome 3"/>
</dbReference>
<dbReference type="ExpressionAtlas" id="Q38954">
    <property type="expression patterns" value="baseline and differential"/>
</dbReference>
<dbReference type="GO" id="GO:0009507">
    <property type="term" value="C:chloroplast"/>
    <property type="evidence" value="ECO:0007005"/>
    <property type="project" value="TAIR"/>
</dbReference>
<dbReference type="GO" id="GO:0009941">
    <property type="term" value="C:chloroplast envelope"/>
    <property type="evidence" value="ECO:0000314"/>
    <property type="project" value="TAIR"/>
</dbReference>
<dbReference type="GO" id="GO:0009706">
    <property type="term" value="C:chloroplast inner membrane"/>
    <property type="evidence" value="ECO:0007669"/>
    <property type="project" value="UniProtKB-SubCell"/>
</dbReference>
<dbReference type="GO" id="GO:0005829">
    <property type="term" value="C:cytosol"/>
    <property type="evidence" value="ECO:0007005"/>
    <property type="project" value="TAIR"/>
</dbReference>
<dbReference type="GO" id="GO:0009673">
    <property type="term" value="F:low-affinity phosphate transmembrane transporter activity"/>
    <property type="evidence" value="ECO:0000314"/>
    <property type="project" value="TAIR"/>
</dbReference>
<dbReference type="GO" id="GO:0015293">
    <property type="term" value="F:symporter activity"/>
    <property type="evidence" value="ECO:0007669"/>
    <property type="project" value="UniProtKB-KW"/>
</dbReference>
<dbReference type="GO" id="GO:0006817">
    <property type="term" value="P:phosphate ion transport"/>
    <property type="evidence" value="ECO:0000315"/>
    <property type="project" value="TAIR"/>
</dbReference>
<dbReference type="InterPro" id="IPR001204">
    <property type="entry name" value="Phos_transporter"/>
</dbReference>
<dbReference type="PANTHER" id="PTHR11101">
    <property type="entry name" value="PHOSPHATE TRANSPORTER"/>
    <property type="match status" value="1"/>
</dbReference>
<dbReference type="PANTHER" id="PTHR11101:SF80">
    <property type="entry name" value="PHOSPHATE TRANSPORTER"/>
    <property type="match status" value="1"/>
</dbReference>
<dbReference type="Pfam" id="PF01384">
    <property type="entry name" value="PHO4"/>
    <property type="match status" value="1"/>
</dbReference>
<comment type="function">
    <text evidence="4">Low affinity H(+)/Pi chloroplastic cotransporter. Involved in inorganic phosphate (orthophosphate, Pi) uptake in green parts of plants in Pi-sufficient conditions. Required for Pi retranslocation during Pi deprivation.</text>
</comment>
<comment type="biophysicochemical properties">
    <kinetics>
        <KM evidence="3">0.4 mM for Pi (at pH 4 and 30 degrees Celsius)</KM>
        <text>Highly specific for Pi among other anions.</text>
    </kinetics>
    <phDependence>
        <text evidence="3">Optimum pH is 4.</text>
    </phDependence>
</comment>
<comment type="subcellular location">
    <subcellularLocation>
        <location evidence="7 8">Plastid</location>
        <location evidence="7 8">Chloroplast inner membrane</location>
        <topology evidence="7 8">Multi-pass membrane protein</topology>
    </subcellularLocation>
</comment>
<comment type="alternative products">
    <event type="alternative splicing"/>
    <isoform>
        <id>Q38954-1</id>
        <name>1</name>
        <sequence type="displayed"/>
    </isoform>
    <isoform>
        <id>Q38954-2</id>
        <name>2</name>
        <sequence type="described" ref="VSP_018146"/>
    </isoform>
</comment>
<comment type="tissue specificity">
    <text evidence="3 5">Mostly expressed in young green tissues. Present in both auto- and heterotrophic tissues. Also expressed in root stele.</text>
</comment>
<comment type="developmental stage">
    <text evidence="5">During flower development, expressed in sepals, stamens and siliques. In seeds, confined to the connecting site of the funiculus. In seedlings, expressed in cotyledons and hypocotyls. Restricted progressively to vascular tissues as plants become older.</text>
</comment>
<comment type="induction">
    <text evidence="3 4 5">Induction by light is inhibited by abscisic acid (ABA) and cycloheximide.</text>
</comment>
<comment type="miscellaneous">
    <molecule>Isoform 2</molecule>
    <text evidence="6">May be due to an intron retention.</text>
</comment>
<comment type="similarity">
    <text evidence="6">Belongs to the inorganic phosphate transporter (PiT) (TC 2.A.20.2) family.</text>
</comment>